<gene>
    <name evidence="5" type="ORF">SIAM614_28492</name>
</gene>
<protein>
    <recommendedName>
        <fullName evidence="3">4-hydroxyproline 2-epimerase</fullName>
        <shortName>4Hyp 2-epimerase</shortName>
        <shortName evidence="3">4HypE</shortName>
        <ecNumber evidence="2">5.1.1.8</ecNumber>
    </recommendedName>
</protein>
<name>4HYPE_ROSAI</name>
<dbReference type="EC" id="5.1.1.8" evidence="2"/>
<dbReference type="EMBL" id="AAUW01000014">
    <property type="protein sequence ID" value="EAV42584.1"/>
    <property type="molecule type" value="Genomic_DNA"/>
</dbReference>
<dbReference type="RefSeq" id="WP_006937102.1">
    <property type="nucleotide sequence ID" value="NZ_AAUW01000014.1"/>
</dbReference>
<dbReference type="SMR" id="A0NXQ7"/>
<dbReference type="GeneID" id="68848136"/>
<dbReference type="eggNOG" id="COG3938">
    <property type="taxonomic scope" value="Bacteria"/>
</dbReference>
<dbReference type="OrthoDB" id="181267at2"/>
<dbReference type="SABIO-RK" id="A0NXQ7"/>
<dbReference type="Proteomes" id="UP000004848">
    <property type="component" value="Unassembled WGS sequence"/>
</dbReference>
<dbReference type="GO" id="GO:0047580">
    <property type="term" value="F:4-hydroxyproline epimerase activity"/>
    <property type="evidence" value="ECO:0000314"/>
    <property type="project" value="CACAO"/>
</dbReference>
<dbReference type="Gene3D" id="3.10.310.10">
    <property type="entry name" value="Diaminopimelate Epimerase, Chain A, domain 1"/>
    <property type="match status" value="2"/>
</dbReference>
<dbReference type="InterPro" id="IPR008794">
    <property type="entry name" value="Pro_racemase_fam"/>
</dbReference>
<dbReference type="PANTHER" id="PTHR33442">
    <property type="entry name" value="TRANS-3-HYDROXY-L-PROLINE DEHYDRATASE"/>
    <property type="match status" value="1"/>
</dbReference>
<dbReference type="PANTHER" id="PTHR33442:SF1">
    <property type="entry name" value="TRANS-3-HYDROXY-L-PROLINE DEHYDRATASE"/>
    <property type="match status" value="1"/>
</dbReference>
<dbReference type="Pfam" id="PF05544">
    <property type="entry name" value="Pro_racemase"/>
    <property type="match status" value="1"/>
</dbReference>
<dbReference type="PIRSF" id="PIRSF029792">
    <property type="entry name" value="Pro_racemase"/>
    <property type="match status" value="1"/>
</dbReference>
<dbReference type="SFLD" id="SFLDS00028">
    <property type="entry name" value="Proline_Racemase"/>
    <property type="match status" value="1"/>
</dbReference>
<dbReference type="SUPFAM" id="SSF54506">
    <property type="entry name" value="Diaminopimelate epimerase-like"/>
    <property type="match status" value="1"/>
</dbReference>
<comment type="function">
    <text evidence="2">Catalyzes the epimerization of trans-4-hydroxy-L-proline (t4LHyp) to cis-4-hydroxy-D-proline (c4DHyp). May be involved in a degradation pathway of t4LHyp, which would allow L.aggregata to grow on t4LHyp as a sole carbon source. Displays no proline racemase activity.</text>
</comment>
<comment type="catalytic activity">
    <reaction evidence="2">
        <text>trans-4-hydroxy-L-proline = cis-4-hydroxy-D-proline</text>
        <dbReference type="Rhea" id="RHEA:21152"/>
        <dbReference type="ChEBI" id="CHEBI:57690"/>
        <dbReference type="ChEBI" id="CHEBI:58375"/>
        <dbReference type="EC" id="5.1.1.8"/>
    </reaction>
</comment>
<comment type="biophysicochemical properties">
    <kinetics>
        <KM evidence="2">3.2 mM for trans-4-hydroxy-L-proline</KM>
        <text evidence="2">kcat is 55 sec(-1) for t4LHyp epimerization.</text>
    </kinetics>
</comment>
<comment type="induction">
    <text evidence="2">Is up-regulated when the bacterium is grown on t4LHyp or t3LHyp as sole carbon source.</text>
</comment>
<comment type="similarity">
    <text evidence="4">Belongs to the proline racemase family.</text>
</comment>
<organism>
    <name type="scientific">Roseibium aggregatum (strain ATCC 25650 / DSM 13394 / JCM 20685 / NBRC 16684 / NCIMB 2208 / IAM 12614 / B1)</name>
    <name type="common">Stappia aggregata</name>
    <dbReference type="NCBI Taxonomy" id="384765"/>
    <lineage>
        <taxon>Bacteria</taxon>
        <taxon>Pseudomonadati</taxon>
        <taxon>Pseudomonadota</taxon>
        <taxon>Alphaproteobacteria</taxon>
        <taxon>Hyphomicrobiales</taxon>
        <taxon>Stappiaceae</taxon>
        <taxon>Roseibium</taxon>
    </lineage>
</organism>
<proteinExistence type="evidence at protein level"/>
<evidence type="ECO:0000250" key="1">
    <source>
        <dbReference type="UniProtKB" id="Q4KGU2"/>
    </source>
</evidence>
<evidence type="ECO:0000269" key="2">
    <source>
    </source>
</evidence>
<evidence type="ECO:0000303" key="3">
    <source>
    </source>
</evidence>
<evidence type="ECO:0000305" key="4"/>
<evidence type="ECO:0000312" key="5">
    <source>
        <dbReference type="EMBL" id="EAV42584.1"/>
    </source>
</evidence>
<sequence>MRVIDSHTAGEPTRVVLDGGPDLGSGTLAERAARLEAEHLDFCASVVLEPRGHDAIIGALLVPPSDPACAAGVIYFNNLQNLGMCGHATIGLGVTLAHLGRIRPGRHRFETPVGVVEIDLIDANTVSVVNIESYRLAKDVTVEVEGVGPVTGDVAWGGNWFFLVKNSPIALTGANIRPLTDLTLKIRTALEKAGVTGKDGAWIDHIELFGPAEDPAAQSRNFVLCPGGAYDRSPCGTGCSAKLACLAADGALAPGQDYLQESVIGSTYKISYQPGPGGGVIPTITGQAFVTSDATLIFNPADPYRSGIRL</sequence>
<accession>A0NXQ7</accession>
<feature type="chain" id="PRO_0000432258" description="4-hydroxyproline 2-epimerase">
    <location>
        <begin position="1"/>
        <end position="310"/>
    </location>
</feature>
<feature type="active site" description="Proton acceptor" evidence="1">
    <location>
        <position position="85"/>
    </location>
</feature>
<feature type="active site" description="Proton donor" evidence="1">
    <location>
        <position position="235"/>
    </location>
</feature>
<feature type="binding site" evidence="1">
    <location>
        <begin position="86"/>
        <end position="87"/>
    </location>
    <ligand>
        <name>substrate</name>
    </ligand>
</feature>
<feature type="binding site" evidence="1">
    <location>
        <position position="205"/>
    </location>
    <ligand>
        <name>substrate</name>
    </ligand>
</feature>
<feature type="binding site" evidence="1">
    <location>
        <position position="231"/>
    </location>
    <ligand>
        <name>substrate</name>
    </ligand>
</feature>
<feature type="binding site" evidence="1">
    <location>
        <begin position="236"/>
        <end position="237"/>
    </location>
    <ligand>
        <name>substrate</name>
    </ligand>
</feature>
<reference key="1">
    <citation type="submission" date="2006-05" db="EMBL/GenBank/DDBJ databases">
        <authorList>
            <person name="King G."/>
            <person name="Ferriera S."/>
            <person name="Johnson J."/>
            <person name="Kravitz S."/>
            <person name="Beeson K."/>
            <person name="Sutton G."/>
            <person name="Rogers Y.-H."/>
            <person name="Friedman R."/>
            <person name="Frazier M."/>
            <person name="Venter J.C."/>
        </authorList>
    </citation>
    <scope>NUCLEOTIDE SEQUENCE [LARGE SCALE GENOMIC DNA]</scope>
    <source>
        <strain>ATCC 25650 / DSM 13394 / JCM 20685 / NBRC 16684 / NCIMB 2208 / IAM 12614 / B1</strain>
    </source>
</reference>
<reference key="2">
    <citation type="journal article" date="2014" name="Elife">
        <title>Prediction and characterization of enzymatic activities guided by sequence similarity and genome neighborhood networks.</title>
        <authorList>
            <person name="Zhao S."/>
            <person name="Sakai A."/>
            <person name="Zhang X."/>
            <person name="Vetting M.W."/>
            <person name="Kumar R."/>
            <person name="Hillerich B."/>
            <person name="San Francisco B."/>
            <person name="Solbiati J."/>
            <person name="Steves A."/>
            <person name="Brown S."/>
            <person name="Akiva E."/>
            <person name="Barber A."/>
            <person name="Seidel R.D."/>
            <person name="Babbitt P.C."/>
            <person name="Almo S.C."/>
            <person name="Gerlt J.A."/>
            <person name="Jacobson M.P."/>
        </authorList>
    </citation>
    <scope>FUNCTION</scope>
    <scope>CATALYTIC ACTIVITY</scope>
    <scope>BIOPHYSICOCHEMICAL PROPERTIES</scope>
    <scope>INDUCTION</scope>
    <source>
        <strain>ATCC 25650 / DSM 13394 / JCM 20685 / NBRC 16684 / NCIMB 2208 / IAM 12614 / B1</strain>
    </source>
</reference>
<keyword id="KW-0413">Isomerase</keyword>